<proteinExistence type="inferred from homology"/>
<accession>Q8X9F8</accession>
<comment type="function">
    <text evidence="1">Part of the high-affinity ATP-driven potassium transport (or Kdp) system, which catalyzes the hydrolysis of ATP coupled with the electrogenic transport of potassium into the cytoplasm. This subunit binds the periplasmic potassium ions and delivers the ions to the membrane domain of KdpB through an intramembrane tunnel.</text>
</comment>
<comment type="subunit">
    <text evidence="1">The system is composed of three essential subunits: KdpA, KdpB and KdpC.</text>
</comment>
<comment type="subcellular location">
    <subcellularLocation>
        <location evidence="1">Cell inner membrane</location>
        <topology evidence="1">Multi-pass membrane protein</topology>
    </subcellularLocation>
</comment>
<comment type="similarity">
    <text evidence="1">Belongs to the KdpA family.</text>
</comment>
<dbReference type="EMBL" id="AE005174">
    <property type="protein sequence ID" value="AAG55019.1"/>
    <property type="molecule type" value="Genomic_DNA"/>
</dbReference>
<dbReference type="EMBL" id="BA000007">
    <property type="protein sequence ID" value="BAB34149.1"/>
    <property type="molecule type" value="Genomic_DNA"/>
</dbReference>
<dbReference type="PIR" id="F90719">
    <property type="entry name" value="F90719"/>
</dbReference>
<dbReference type="PIR" id="G85569">
    <property type="entry name" value="G85569"/>
</dbReference>
<dbReference type="RefSeq" id="NP_308753.1">
    <property type="nucleotide sequence ID" value="NC_002695.1"/>
</dbReference>
<dbReference type="RefSeq" id="WP_000741164.1">
    <property type="nucleotide sequence ID" value="NZ_VOAI01000012.1"/>
</dbReference>
<dbReference type="SMR" id="Q8X9F8"/>
<dbReference type="STRING" id="155864.Z0845"/>
<dbReference type="GeneID" id="917095"/>
<dbReference type="KEGG" id="ece:Z0845"/>
<dbReference type="KEGG" id="ecs:ECs_0726"/>
<dbReference type="PATRIC" id="fig|386585.9.peg.842"/>
<dbReference type="eggNOG" id="COG2060">
    <property type="taxonomic scope" value="Bacteria"/>
</dbReference>
<dbReference type="HOGENOM" id="CLU_018614_3_0_6"/>
<dbReference type="OMA" id="WQNYGGE"/>
<dbReference type="Proteomes" id="UP000000558">
    <property type="component" value="Chromosome"/>
</dbReference>
<dbReference type="Proteomes" id="UP000002519">
    <property type="component" value="Chromosome"/>
</dbReference>
<dbReference type="GO" id="GO:0005886">
    <property type="term" value="C:plasma membrane"/>
    <property type="evidence" value="ECO:0007669"/>
    <property type="project" value="UniProtKB-SubCell"/>
</dbReference>
<dbReference type="GO" id="GO:0008556">
    <property type="term" value="F:P-type potassium transmembrane transporter activity"/>
    <property type="evidence" value="ECO:0007669"/>
    <property type="project" value="InterPro"/>
</dbReference>
<dbReference type="GO" id="GO:0030955">
    <property type="term" value="F:potassium ion binding"/>
    <property type="evidence" value="ECO:0007669"/>
    <property type="project" value="UniProtKB-UniRule"/>
</dbReference>
<dbReference type="HAMAP" id="MF_00275">
    <property type="entry name" value="KdpA"/>
    <property type="match status" value="1"/>
</dbReference>
<dbReference type="InterPro" id="IPR004623">
    <property type="entry name" value="KdpA"/>
</dbReference>
<dbReference type="NCBIfam" id="TIGR00680">
    <property type="entry name" value="kdpA"/>
    <property type="match status" value="1"/>
</dbReference>
<dbReference type="PANTHER" id="PTHR30607">
    <property type="entry name" value="POTASSIUM-TRANSPORTING ATPASE A CHAIN"/>
    <property type="match status" value="1"/>
</dbReference>
<dbReference type="PANTHER" id="PTHR30607:SF2">
    <property type="entry name" value="POTASSIUM-TRANSPORTING ATPASE POTASSIUM-BINDING SUBUNIT"/>
    <property type="match status" value="1"/>
</dbReference>
<dbReference type="Pfam" id="PF03814">
    <property type="entry name" value="KdpA"/>
    <property type="match status" value="1"/>
</dbReference>
<dbReference type="PIRSF" id="PIRSF001294">
    <property type="entry name" value="K_ATPaseA"/>
    <property type="match status" value="1"/>
</dbReference>
<name>KDPA_ECO57</name>
<protein>
    <recommendedName>
        <fullName evidence="1">Potassium-transporting ATPase potassium-binding subunit</fullName>
    </recommendedName>
    <alternativeName>
        <fullName evidence="1">ATP phosphohydrolase [potassium-transporting] A chain</fullName>
    </alternativeName>
    <alternativeName>
        <fullName evidence="1">Potassium-binding and translocating subunit A</fullName>
    </alternativeName>
    <alternativeName>
        <fullName evidence="1">Potassium-translocating ATPase A chain</fullName>
    </alternativeName>
</protein>
<gene>
    <name evidence="1" type="primary">kdpA</name>
    <name type="ordered locus">Z0845</name>
    <name type="ordered locus">ECs0726</name>
</gene>
<sequence>MAAQGFLLIATFLLVLMVLARPLGSGLAWLINDIPLPGTTGVERVLFSALGVSNHEMNWKQYLCAILGLNMLGLAVLFFMLLGQHYLPLNPQQLPGLSWDLALNTAVSFVTNTNWQSYSGETTLSYFSQMAGLTVQNFLSAASGIAVIFALIRAFTRQSMSTLGNAWVDLLRITLWVLVPVALVIALFFIQQGALQNFLPYQAVNTVEGAQQLLPMGPVASQEAIKMLGTNGGGFFNANSSHPFENPTALTNFVQMLAIFLIPTALCFAFGEVTGDRRQGRMLLWAMSVIFVICVGVVMWAEVQGNPHLLALGADSSINMEGKESRFGVLVSSLFAVVTTAASCGAVIAMHDSFTALGGMVPMWLMQIGEVVFGGVGSGLYGMMLFVLLAVFIAGLMIGRTPEYLGKKIDVREMKLTALAILVTPTLVLMGAALAMMTDAGRSAMLNPGPHGFSEVLYAVSSAANNNGSAFAGLSANSPFWNCLLAFCMFVGRFGVIIPVMAIAGSLVSKKSQPASSGTLPTHGPLFVGLLIGTVLLVGALTFIPALALGPVAEYLS</sequence>
<feature type="chain" id="PRO_0000166496" description="Potassium-transporting ATPase potassium-binding subunit">
    <location>
        <begin position="1"/>
        <end position="557"/>
    </location>
</feature>
<feature type="transmembrane region" description="Helical" evidence="1">
    <location>
        <begin position="5"/>
        <end position="25"/>
    </location>
</feature>
<feature type="transmembrane region" description="Helical" evidence="1">
    <location>
        <begin position="63"/>
        <end position="83"/>
    </location>
</feature>
<feature type="transmembrane region" description="Helical" evidence="1">
    <location>
        <begin position="132"/>
        <end position="152"/>
    </location>
</feature>
<feature type="transmembrane region" description="Helical" evidence="1">
    <location>
        <begin position="170"/>
        <end position="190"/>
    </location>
</feature>
<feature type="transmembrane region" description="Helical" evidence="1">
    <location>
        <begin position="253"/>
        <end position="273"/>
    </location>
</feature>
<feature type="transmembrane region" description="Helical" evidence="1">
    <location>
        <begin position="283"/>
        <end position="303"/>
    </location>
</feature>
<feature type="transmembrane region" description="Helical" evidence="1">
    <location>
        <begin position="329"/>
        <end position="349"/>
    </location>
</feature>
<feature type="transmembrane region" description="Helical" evidence="1">
    <location>
        <begin position="356"/>
        <end position="376"/>
    </location>
</feature>
<feature type="transmembrane region" description="Helical" evidence="1">
    <location>
        <begin position="379"/>
        <end position="399"/>
    </location>
</feature>
<feature type="transmembrane region" description="Helical" evidence="1">
    <location>
        <begin position="416"/>
        <end position="436"/>
    </location>
</feature>
<feature type="transmembrane region" description="Helical" evidence="1">
    <location>
        <begin position="484"/>
        <end position="504"/>
    </location>
</feature>
<feature type="transmembrane region" description="Helical" evidence="1">
    <location>
        <begin position="526"/>
        <end position="546"/>
    </location>
</feature>
<keyword id="KW-0997">Cell inner membrane</keyword>
<keyword id="KW-1003">Cell membrane</keyword>
<keyword id="KW-0406">Ion transport</keyword>
<keyword id="KW-0472">Membrane</keyword>
<keyword id="KW-0630">Potassium</keyword>
<keyword id="KW-0633">Potassium transport</keyword>
<keyword id="KW-1185">Reference proteome</keyword>
<keyword id="KW-0812">Transmembrane</keyword>
<keyword id="KW-1133">Transmembrane helix</keyword>
<keyword id="KW-0813">Transport</keyword>
<organism>
    <name type="scientific">Escherichia coli O157:H7</name>
    <dbReference type="NCBI Taxonomy" id="83334"/>
    <lineage>
        <taxon>Bacteria</taxon>
        <taxon>Pseudomonadati</taxon>
        <taxon>Pseudomonadota</taxon>
        <taxon>Gammaproteobacteria</taxon>
        <taxon>Enterobacterales</taxon>
        <taxon>Enterobacteriaceae</taxon>
        <taxon>Escherichia</taxon>
    </lineage>
</organism>
<reference key="1">
    <citation type="journal article" date="2001" name="Nature">
        <title>Genome sequence of enterohaemorrhagic Escherichia coli O157:H7.</title>
        <authorList>
            <person name="Perna N.T."/>
            <person name="Plunkett G. III"/>
            <person name="Burland V."/>
            <person name="Mau B."/>
            <person name="Glasner J.D."/>
            <person name="Rose D.J."/>
            <person name="Mayhew G.F."/>
            <person name="Evans P.S."/>
            <person name="Gregor J."/>
            <person name="Kirkpatrick H.A."/>
            <person name="Posfai G."/>
            <person name="Hackett J."/>
            <person name="Klink S."/>
            <person name="Boutin A."/>
            <person name="Shao Y."/>
            <person name="Miller L."/>
            <person name="Grotbeck E.J."/>
            <person name="Davis N.W."/>
            <person name="Lim A."/>
            <person name="Dimalanta E.T."/>
            <person name="Potamousis K."/>
            <person name="Apodaca J."/>
            <person name="Anantharaman T.S."/>
            <person name="Lin J."/>
            <person name="Yen G."/>
            <person name="Schwartz D.C."/>
            <person name="Welch R.A."/>
            <person name="Blattner F.R."/>
        </authorList>
    </citation>
    <scope>NUCLEOTIDE SEQUENCE [LARGE SCALE GENOMIC DNA]</scope>
    <source>
        <strain>O157:H7 / EDL933 / ATCC 700927 / EHEC</strain>
    </source>
</reference>
<reference key="2">
    <citation type="journal article" date="2001" name="DNA Res.">
        <title>Complete genome sequence of enterohemorrhagic Escherichia coli O157:H7 and genomic comparison with a laboratory strain K-12.</title>
        <authorList>
            <person name="Hayashi T."/>
            <person name="Makino K."/>
            <person name="Ohnishi M."/>
            <person name="Kurokawa K."/>
            <person name="Ishii K."/>
            <person name="Yokoyama K."/>
            <person name="Han C.-G."/>
            <person name="Ohtsubo E."/>
            <person name="Nakayama K."/>
            <person name="Murata T."/>
            <person name="Tanaka M."/>
            <person name="Tobe T."/>
            <person name="Iida T."/>
            <person name="Takami H."/>
            <person name="Honda T."/>
            <person name="Sasakawa C."/>
            <person name="Ogasawara N."/>
            <person name="Yasunaga T."/>
            <person name="Kuhara S."/>
            <person name="Shiba T."/>
            <person name="Hattori M."/>
            <person name="Shinagawa H."/>
        </authorList>
    </citation>
    <scope>NUCLEOTIDE SEQUENCE [LARGE SCALE GENOMIC DNA]</scope>
    <source>
        <strain>O157:H7 / Sakai / RIMD 0509952 / EHEC</strain>
    </source>
</reference>
<evidence type="ECO:0000255" key="1">
    <source>
        <dbReference type="HAMAP-Rule" id="MF_00275"/>
    </source>
</evidence>